<proteinExistence type="evidence at protein level"/>
<feature type="chain" id="PRO_0000445613" description="Trichothecene C-4 hydroxylase">
    <location>
        <begin position="1"/>
        <end position="499"/>
    </location>
</feature>
<feature type="transmembrane region" description="Helical" evidence="2">
    <location>
        <begin position="7"/>
        <end position="29"/>
    </location>
</feature>
<feature type="binding site" description="axial binding residue" evidence="1">
    <location>
        <position position="442"/>
    </location>
    <ligand>
        <name>heme</name>
        <dbReference type="ChEBI" id="CHEBI:30413"/>
    </ligand>
    <ligandPart>
        <name>Fe</name>
        <dbReference type="ChEBI" id="CHEBI:18248"/>
    </ligandPart>
</feature>
<feature type="glycosylation site" description="N-linked (GlcNAc...) asparagine" evidence="3">
    <location>
        <position position="173"/>
    </location>
</feature>
<feature type="glycosylation site" description="N-linked (GlcNAc...) asparagine" evidence="3">
    <location>
        <position position="287"/>
    </location>
</feature>
<feature type="glycosylation site" description="N-linked (GlcNAc...) asparagine" evidence="3">
    <location>
        <position position="473"/>
    </location>
</feature>
<gene>
    <name evidence="5" type="primary">TRI11</name>
</gene>
<evidence type="ECO:0000250" key="1">
    <source>
        <dbReference type="UniProtKB" id="P04798"/>
    </source>
</evidence>
<evidence type="ECO:0000255" key="2"/>
<evidence type="ECO:0000255" key="3">
    <source>
        <dbReference type="PROSITE-ProRule" id="PRU00498"/>
    </source>
</evidence>
<evidence type="ECO:0000269" key="4">
    <source>
    </source>
</evidence>
<evidence type="ECO:0000303" key="5">
    <source>
    </source>
</evidence>
<evidence type="ECO:0000305" key="6"/>
<evidence type="ECO:0000305" key="7">
    <source>
    </source>
</evidence>
<evidence type="ECO:0000305" key="8">
    <source>
    </source>
</evidence>
<reference key="1">
    <citation type="journal article" date="2011" name="Appl. Environ. Microbiol.">
        <title>Identification of loci and functional characterization of trichothecene biosynthesis genes in filamentous fungi of the genus Trichoderma.</title>
        <authorList>
            <person name="Cardoza R.E."/>
            <person name="Malmierca M.G."/>
            <person name="Hermosa M.R."/>
            <person name="Alexander N.J."/>
            <person name="McCormick S.P."/>
            <person name="Proctor R.H."/>
            <person name="Tijerino A.M."/>
            <person name="Rumbero A."/>
            <person name="Monte E."/>
            <person name="Gutierrez S."/>
        </authorList>
    </citation>
    <scope>NUCLEOTIDE SEQUENCE [GENOMIC DNA]</scope>
    <scope>IDENTIFICATION</scope>
    <scope>FUNCTION</scope>
    <scope>CATALYTIC ACTIVITY</scope>
    <scope>PATHWAY</scope>
    <source>
        <strain>IBT 40837</strain>
    </source>
</reference>
<reference key="2">
    <citation type="journal article" date="2018" name="Fungal Genet. Biol.">
        <title>Effect of deletion of a trichothecene toxin regulatory gene on the secondary metabolism transcriptome of the saprotrophic fungus Trichoderma arundinaceum.</title>
        <authorList>
            <person name="Lindo L."/>
            <person name="McCormick S.P."/>
            <person name="Cardoza R.E."/>
            <person name="Brown D.W."/>
            <person name="Kim H.S."/>
            <person name="Alexander N.J."/>
            <person name="Proctor R.H."/>
            <person name="Gutierrez S."/>
        </authorList>
    </citation>
    <scope>FUNCTION</scope>
</reference>
<organism>
    <name type="scientific">Trichoderma arundinaceum</name>
    <dbReference type="NCBI Taxonomy" id="490622"/>
    <lineage>
        <taxon>Eukaryota</taxon>
        <taxon>Fungi</taxon>
        <taxon>Dikarya</taxon>
        <taxon>Ascomycota</taxon>
        <taxon>Pezizomycotina</taxon>
        <taxon>Sordariomycetes</taxon>
        <taxon>Hypocreomycetidae</taxon>
        <taxon>Hypocreales</taxon>
        <taxon>Hypocreaceae</taxon>
        <taxon>Trichoderma</taxon>
    </lineage>
</organism>
<comment type="function">
    <text evidence="4 7 8">Trichothecene C-4 hydroxylase; part of the gene cluster that mediates the production of the antimicrobial trichothecene harzianum A (HA) that plays a role in Botrytis cinerea antagonistic activity and plant defense priming (PubMed:21642405). The biosynthesis of harzianum A begins with the cyclization of farnesyl diphosphate to trichodiene and is catalyzed by the trichodiene synthase TRI5 (PubMed:21642405). Trichodiene undergoes a series of oxygenations catalyzed by the cytochrome P450 monooxygenase TRI4. TRI4 controls the addition of 3 oxygens at C-2, C-11, and the C-12, C-13-epoxide to form the intermediate isotrichodiol (PubMed:21642405). Isotrichodiol then undergoes a non-enzymatic isomerization and cyclization to form 12,13-epoxytrichothec-9-ene (EPT) which is further converted to trichodermol by the cytochrome P450 monooxygenase TRI11 via C-4 hydroxylation (PubMed:21642405). The last step of HA synthesis is esterification of an octatriendioyl moiety to the C-4 oxygen of trichodermol. The octatriendioyl moiety is probably produced by the polyketide synthase TRI17 and the esterification performed by the trichothecene O-acetyltransferase TRI3 (Probable).</text>
</comment>
<comment type="cofactor">
    <cofactor evidence="1">
        <name>heme</name>
        <dbReference type="ChEBI" id="CHEBI:30413"/>
    </cofactor>
</comment>
<comment type="pathway">
    <text evidence="4">Sesquiterpene biosynthesis; trichothecene biosynthesis.</text>
</comment>
<comment type="subcellular location">
    <subcellularLocation>
        <location evidence="2">Membrane</location>
        <topology evidence="2">Single-pass membrane protein</topology>
    </subcellularLocation>
</comment>
<comment type="miscellaneous">
    <text evidence="6">Trichothecenes are sesquiterpenoid toxins that act by inhibiting protein biosynthesis.</text>
</comment>
<comment type="similarity">
    <text evidence="6">Belongs to the cytochrome P450 family.</text>
</comment>
<sequence length="499" mass="57322">MANAISVGVAVQLVLTVLLASIPLRVIWNLFFHPLSYIPGPRLWIAFPIFRQIASIRGVFDAQMCEYHRKYGNAVRFSPNEVSFITEQAWRDIYDHRPNQLERFILSTTRRPDIFDANEIDHARYRKAMLPAFSPKGLQEQEPIVRGYIDTFIERLREVSATGESTDMVKWYNFTTFDIIGDLAFGESFGGLRNREYHFTISFTFEAFKLLSYLEAGAAYPLLLKILMAFTPQSLIEARDKKEEHAETTVRKRLDNRALHGRGDFMDYLLRNRGEKQGLNDKELVANASTLITAGSETTATILSGITYWLLQTPNVLQKVTEEVRSAFQSEADITFTSATSQLPYMLACFQEAFRHYPPVPTGMPRVTPSHGITKISGYDISPNTKVSVHQLAAYSHPDNFHRPREFVPERWLPDAKTNPSSPWYNDRRETVQPFNVGPRNCVGRNLAEQEIRVMLARVLWNFDLELAPESKNWTDQKTHFLWEKGALMCKLHDRFASK</sequence>
<keyword id="KW-0325">Glycoprotein</keyword>
<keyword id="KW-0349">Heme</keyword>
<keyword id="KW-0408">Iron</keyword>
<keyword id="KW-0472">Membrane</keyword>
<keyword id="KW-0479">Metal-binding</keyword>
<keyword id="KW-0503">Monooxygenase</keyword>
<keyword id="KW-0560">Oxidoreductase</keyword>
<keyword id="KW-0812">Transmembrane</keyword>
<keyword id="KW-1133">Transmembrane helix</keyword>
<dbReference type="EC" id="1.-.-.-" evidence="4"/>
<dbReference type="EMBL" id="FN394493">
    <property type="protein sequence ID" value="CAY87359.1"/>
    <property type="molecule type" value="Genomic_DNA"/>
</dbReference>
<dbReference type="SMR" id="G0KYA9"/>
<dbReference type="GlyCosmos" id="G0KYA9">
    <property type="glycosylation" value="3 sites, No reported glycans"/>
</dbReference>
<dbReference type="OrthoDB" id="5119769at2759"/>
<dbReference type="BioCyc" id="MetaCyc:MONOMER-19548"/>
<dbReference type="UniPathway" id="UPA00267"/>
<dbReference type="GO" id="GO:0016020">
    <property type="term" value="C:membrane"/>
    <property type="evidence" value="ECO:0007669"/>
    <property type="project" value="UniProtKB-SubCell"/>
</dbReference>
<dbReference type="GO" id="GO:0020037">
    <property type="term" value="F:heme binding"/>
    <property type="evidence" value="ECO:0007669"/>
    <property type="project" value="InterPro"/>
</dbReference>
<dbReference type="GO" id="GO:0005506">
    <property type="term" value="F:iron ion binding"/>
    <property type="evidence" value="ECO:0007669"/>
    <property type="project" value="InterPro"/>
</dbReference>
<dbReference type="GO" id="GO:0004497">
    <property type="term" value="F:monooxygenase activity"/>
    <property type="evidence" value="ECO:0007669"/>
    <property type="project" value="UniProtKB-KW"/>
</dbReference>
<dbReference type="GO" id="GO:0016705">
    <property type="term" value="F:oxidoreductase activity, acting on paired donors, with incorporation or reduction of molecular oxygen"/>
    <property type="evidence" value="ECO:0007669"/>
    <property type="project" value="InterPro"/>
</dbReference>
<dbReference type="CDD" id="cd11058">
    <property type="entry name" value="CYP60B-like"/>
    <property type="match status" value="1"/>
</dbReference>
<dbReference type="Gene3D" id="1.10.630.10">
    <property type="entry name" value="Cytochrome P450"/>
    <property type="match status" value="1"/>
</dbReference>
<dbReference type="InterPro" id="IPR001128">
    <property type="entry name" value="Cyt_P450"/>
</dbReference>
<dbReference type="InterPro" id="IPR017972">
    <property type="entry name" value="Cyt_P450_CS"/>
</dbReference>
<dbReference type="InterPro" id="IPR002401">
    <property type="entry name" value="Cyt_P450_E_grp-I"/>
</dbReference>
<dbReference type="InterPro" id="IPR036396">
    <property type="entry name" value="Cyt_P450_sf"/>
</dbReference>
<dbReference type="InterPro" id="IPR050121">
    <property type="entry name" value="Cytochrome_P450_monoxygenase"/>
</dbReference>
<dbReference type="PANTHER" id="PTHR24305">
    <property type="entry name" value="CYTOCHROME P450"/>
    <property type="match status" value="1"/>
</dbReference>
<dbReference type="PANTHER" id="PTHR24305:SF230">
    <property type="entry name" value="P450, PUTATIVE (EUROFUNG)-RELATED"/>
    <property type="match status" value="1"/>
</dbReference>
<dbReference type="Pfam" id="PF00067">
    <property type="entry name" value="p450"/>
    <property type="match status" value="1"/>
</dbReference>
<dbReference type="PRINTS" id="PR00463">
    <property type="entry name" value="EP450I"/>
</dbReference>
<dbReference type="PRINTS" id="PR00385">
    <property type="entry name" value="P450"/>
</dbReference>
<dbReference type="SUPFAM" id="SSF48264">
    <property type="entry name" value="Cytochrome P450"/>
    <property type="match status" value="1"/>
</dbReference>
<dbReference type="PROSITE" id="PS00086">
    <property type="entry name" value="CYTOCHROME_P450"/>
    <property type="match status" value="1"/>
</dbReference>
<protein>
    <recommendedName>
        <fullName evidence="5">Trichothecene C-4 hydroxylase</fullName>
        <ecNumber evidence="4">1.-.-.-</ecNumber>
    </recommendedName>
    <alternativeName>
        <fullName evidence="5">Cytochrome P450 monooxygenase TRI11</fullName>
    </alternativeName>
    <alternativeName>
        <fullName evidence="5">Trichothecene biosynthesis protein 11</fullName>
    </alternativeName>
</protein>
<accession>G0KYA9</accession>
<name>TRI11_TRIAR</name>